<proteinExistence type="inferred from homology"/>
<protein>
    <recommendedName>
        <fullName evidence="1">Cysteine--tRNA ligase</fullName>
        <ecNumber evidence="1">6.1.1.16</ecNumber>
    </recommendedName>
    <alternativeName>
        <fullName evidence="1">Cysteinyl-tRNA synthetase</fullName>
        <shortName evidence="1">CysRS</shortName>
    </alternativeName>
</protein>
<gene>
    <name evidence="1" type="primary">cysS</name>
    <name type="ordered locus">VCM66_1771</name>
</gene>
<comment type="catalytic activity">
    <reaction evidence="1">
        <text>tRNA(Cys) + L-cysteine + ATP = L-cysteinyl-tRNA(Cys) + AMP + diphosphate</text>
        <dbReference type="Rhea" id="RHEA:17773"/>
        <dbReference type="Rhea" id="RHEA-COMP:9661"/>
        <dbReference type="Rhea" id="RHEA-COMP:9679"/>
        <dbReference type="ChEBI" id="CHEBI:30616"/>
        <dbReference type="ChEBI" id="CHEBI:33019"/>
        <dbReference type="ChEBI" id="CHEBI:35235"/>
        <dbReference type="ChEBI" id="CHEBI:78442"/>
        <dbReference type="ChEBI" id="CHEBI:78517"/>
        <dbReference type="ChEBI" id="CHEBI:456215"/>
        <dbReference type="EC" id="6.1.1.16"/>
    </reaction>
</comment>
<comment type="cofactor">
    <cofactor evidence="1">
        <name>Zn(2+)</name>
        <dbReference type="ChEBI" id="CHEBI:29105"/>
    </cofactor>
    <text evidence="1">Binds 1 zinc ion per subunit.</text>
</comment>
<comment type="subunit">
    <text evidence="1">Monomer.</text>
</comment>
<comment type="subcellular location">
    <subcellularLocation>
        <location evidence="1">Cytoplasm</location>
    </subcellularLocation>
</comment>
<comment type="similarity">
    <text evidence="1">Belongs to the class-I aminoacyl-tRNA synthetase family.</text>
</comment>
<dbReference type="EC" id="6.1.1.16" evidence="1"/>
<dbReference type="EMBL" id="CP001233">
    <property type="protein sequence ID" value="ACP06077.1"/>
    <property type="molecule type" value="Genomic_DNA"/>
</dbReference>
<dbReference type="RefSeq" id="WP_000913180.1">
    <property type="nucleotide sequence ID" value="NC_012578.1"/>
</dbReference>
<dbReference type="SMR" id="C3LNF1"/>
<dbReference type="KEGG" id="vcm:VCM66_1771"/>
<dbReference type="HOGENOM" id="CLU_013528_0_1_6"/>
<dbReference type="Proteomes" id="UP000001217">
    <property type="component" value="Chromosome I"/>
</dbReference>
<dbReference type="GO" id="GO:0005829">
    <property type="term" value="C:cytosol"/>
    <property type="evidence" value="ECO:0007669"/>
    <property type="project" value="TreeGrafter"/>
</dbReference>
<dbReference type="GO" id="GO:0005524">
    <property type="term" value="F:ATP binding"/>
    <property type="evidence" value="ECO:0007669"/>
    <property type="project" value="UniProtKB-UniRule"/>
</dbReference>
<dbReference type="GO" id="GO:0004817">
    <property type="term" value="F:cysteine-tRNA ligase activity"/>
    <property type="evidence" value="ECO:0007669"/>
    <property type="project" value="UniProtKB-UniRule"/>
</dbReference>
<dbReference type="GO" id="GO:0008270">
    <property type="term" value="F:zinc ion binding"/>
    <property type="evidence" value="ECO:0007669"/>
    <property type="project" value="UniProtKB-UniRule"/>
</dbReference>
<dbReference type="GO" id="GO:0006423">
    <property type="term" value="P:cysteinyl-tRNA aminoacylation"/>
    <property type="evidence" value="ECO:0007669"/>
    <property type="project" value="UniProtKB-UniRule"/>
</dbReference>
<dbReference type="CDD" id="cd07963">
    <property type="entry name" value="Anticodon_Ia_Cys"/>
    <property type="match status" value="1"/>
</dbReference>
<dbReference type="CDD" id="cd00672">
    <property type="entry name" value="CysRS_core"/>
    <property type="match status" value="1"/>
</dbReference>
<dbReference type="FunFam" id="1.20.120.1910:FF:000001">
    <property type="entry name" value="Cysteine--tRNA ligase"/>
    <property type="match status" value="1"/>
</dbReference>
<dbReference type="FunFam" id="3.40.50.620:FF:000009">
    <property type="entry name" value="Cysteine--tRNA ligase"/>
    <property type="match status" value="1"/>
</dbReference>
<dbReference type="Gene3D" id="1.20.120.1910">
    <property type="entry name" value="Cysteine-tRNA ligase, C-terminal anti-codon recognition domain"/>
    <property type="match status" value="1"/>
</dbReference>
<dbReference type="Gene3D" id="3.40.50.620">
    <property type="entry name" value="HUPs"/>
    <property type="match status" value="1"/>
</dbReference>
<dbReference type="HAMAP" id="MF_00041">
    <property type="entry name" value="Cys_tRNA_synth"/>
    <property type="match status" value="1"/>
</dbReference>
<dbReference type="InterPro" id="IPR015803">
    <property type="entry name" value="Cys-tRNA-ligase"/>
</dbReference>
<dbReference type="InterPro" id="IPR015273">
    <property type="entry name" value="Cys-tRNA-synt_Ia_DALR"/>
</dbReference>
<dbReference type="InterPro" id="IPR024909">
    <property type="entry name" value="Cys-tRNA/MSH_ligase"/>
</dbReference>
<dbReference type="InterPro" id="IPR056411">
    <property type="entry name" value="CysS_C"/>
</dbReference>
<dbReference type="InterPro" id="IPR014729">
    <property type="entry name" value="Rossmann-like_a/b/a_fold"/>
</dbReference>
<dbReference type="InterPro" id="IPR032678">
    <property type="entry name" value="tRNA-synt_1_cat_dom"/>
</dbReference>
<dbReference type="InterPro" id="IPR009080">
    <property type="entry name" value="tRNAsynth_Ia_anticodon-bd"/>
</dbReference>
<dbReference type="NCBIfam" id="TIGR00435">
    <property type="entry name" value="cysS"/>
    <property type="match status" value="1"/>
</dbReference>
<dbReference type="PANTHER" id="PTHR10890:SF3">
    <property type="entry name" value="CYSTEINE--TRNA LIGASE, CYTOPLASMIC"/>
    <property type="match status" value="1"/>
</dbReference>
<dbReference type="PANTHER" id="PTHR10890">
    <property type="entry name" value="CYSTEINYL-TRNA SYNTHETASE"/>
    <property type="match status" value="1"/>
</dbReference>
<dbReference type="Pfam" id="PF23493">
    <property type="entry name" value="CysS_C"/>
    <property type="match status" value="1"/>
</dbReference>
<dbReference type="Pfam" id="PF09190">
    <property type="entry name" value="DALR_2"/>
    <property type="match status" value="1"/>
</dbReference>
<dbReference type="Pfam" id="PF01406">
    <property type="entry name" value="tRNA-synt_1e"/>
    <property type="match status" value="1"/>
</dbReference>
<dbReference type="PRINTS" id="PR00983">
    <property type="entry name" value="TRNASYNTHCYS"/>
</dbReference>
<dbReference type="SMART" id="SM00840">
    <property type="entry name" value="DALR_2"/>
    <property type="match status" value="1"/>
</dbReference>
<dbReference type="SUPFAM" id="SSF47323">
    <property type="entry name" value="Anticodon-binding domain of a subclass of class I aminoacyl-tRNA synthetases"/>
    <property type="match status" value="1"/>
</dbReference>
<dbReference type="SUPFAM" id="SSF52374">
    <property type="entry name" value="Nucleotidylyl transferase"/>
    <property type="match status" value="1"/>
</dbReference>
<evidence type="ECO:0000255" key="1">
    <source>
        <dbReference type="HAMAP-Rule" id="MF_00041"/>
    </source>
</evidence>
<accession>C3LNF1</accession>
<reference key="1">
    <citation type="journal article" date="2008" name="PLoS ONE">
        <title>A recalibrated molecular clock and independent origins for the cholera pandemic clones.</title>
        <authorList>
            <person name="Feng L."/>
            <person name="Reeves P.R."/>
            <person name="Lan R."/>
            <person name="Ren Y."/>
            <person name="Gao C."/>
            <person name="Zhou Z."/>
            <person name="Ren Y."/>
            <person name="Cheng J."/>
            <person name="Wang W."/>
            <person name="Wang J."/>
            <person name="Qian W."/>
            <person name="Li D."/>
            <person name="Wang L."/>
        </authorList>
    </citation>
    <scope>NUCLEOTIDE SEQUENCE [LARGE SCALE GENOMIC DNA]</scope>
    <source>
        <strain>M66-2</strain>
    </source>
</reference>
<sequence length="459" mass="52034">MLKIYNSLTRQKEEFKPIVAGKVGMYVCGVTIYDLCHIGHGRTFVSFDVVARYLRYLGYDLTFVRNITDIDDKIIKRAAENAETCESLTERLIQEMYADFDALNIKRPDVEPRATAYIEEIIALVERLIERGFAYVADNGDVMFEVSQYSEYGKLSKQDLDQLQAGARVDIEAAKRSPLDFVLWKMSKPGEPTWESPWGSGRPGWHIECSAMNSSILGTHFDIHGGGSDLQFPHHENEIAQSCCAHDTQYVNTWMHSGMVMVDKEKMSKSLGNFFTIRDVLGHYDAETVRYFLMSGHYRSQLNYSEENLNQARASLERLYNALRGLDRSVPAAGGEEYVTRFTAAMNDDFNTPEAYSVLFDMAREINRLKSEDMTNASALGSLMRELADVIGILYQEPEAFFQGSAEDEDAAQIEALIKLRNDSRATKDWANADLARDKLNEMGIVLEDGPNGTTWRRK</sequence>
<keyword id="KW-0030">Aminoacyl-tRNA synthetase</keyword>
<keyword id="KW-0067">ATP-binding</keyword>
<keyword id="KW-0963">Cytoplasm</keyword>
<keyword id="KW-0436">Ligase</keyword>
<keyword id="KW-0479">Metal-binding</keyword>
<keyword id="KW-0547">Nucleotide-binding</keyword>
<keyword id="KW-0648">Protein biosynthesis</keyword>
<keyword id="KW-0862">Zinc</keyword>
<name>SYC_VIBCM</name>
<organism>
    <name type="scientific">Vibrio cholerae serotype O1 (strain M66-2)</name>
    <dbReference type="NCBI Taxonomy" id="579112"/>
    <lineage>
        <taxon>Bacteria</taxon>
        <taxon>Pseudomonadati</taxon>
        <taxon>Pseudomonadota</taxon>
        <taxon>Gammaproteobacteria</taxon>
        <taxon>Vibrionales</taxon>
        <taxon>Vibrionaceae</taxon>
        <taxon>Vibrio</taxon>
    </lineage>
</organism>
<feature type="chain" id="PRO_1000117309" description="Cysteine--tRNA ligase">
    <location>
        <begin position="1"/>
        <end position="459"/>
    </location>
</feature>
<feature type="short sequence motif" description="'HIGH' region">
    <location>
        <begin position="30"/>
        <end position="40"/>
    </location>
</feature>
<feature type="short sequence motif" description="'KMSKS' region">
    <location>
        <begin position="266"/>
        <end position="270"/>
    </location>
</feature>
<feature type="binding site" evidence="1">
    <location>
        <position position="28"/>
    </location>
    <ligand>
        <name>Zn(2+)</name>
        <dbReference type="ChEBI" id="CHEBI:29105"/>
    </ligand>
</feature>
<feature type="binding site" evidence="1">
    <location>
        <position position="209"/>
    </location>
    <ligand>
        <name>Zn(2+)</name>
        <dbReference type="ChEBI" id="CHEBI:29105"/>
    </ligand>
</feature>
<feature type="binding site" evidence="1">
    <location>
        <position position="234"/>
    </location>
    <ligand>
        <name>Zn(2+)</name>
        <dbReference type="ChEBI" id="CHEBI:29105"/>
    </ligand>
</feature>
<feature type="binding site" evidence="1">
    <location>
        <position position="238"/>
    </location>
    <ligand>
        <name>Zn(2+)</name>
        <dbReference type="ChEBI" id="CHEBI:29105"/>
    </ligand>
</feature>
<feature type="binding site" evidence="1">
    <location>
        <position position="269"/>
    </location>
    <ligand>
        <name>ATP</name>
        <dbReference type="ChEBI" id="CHEBI:30616"/>
    </ligand>
</feature>